<dbReference type="EMBL" id="CR376774">
    <property type="status" value="NOT_ANNOTATED_CDS"/>
    <property type="molecule type" value="Genomic_DNA"/>
</dbReference>
<dbReference type="RefSeq" id="NP_001410729.1">
    <property type="nucleotide sequence ID" value="NM_001423800.1"/>
</dbReference>
<dbReference type="FunCoup" id="E7F211">
    <property type="interactions" value="1791"/>
</dbReference>
<dbReference type="STRING" id="7955.ENSDARP00000065863"/>
<dbReference type="PaxDb" id="7955-ENSDARP00000065863"/>
<dbReference type="PeptideAtlas" id="E7F211"/>
<dbReference type="Ensembl" id="ENSDART00000065864">
    <property type="protein sequence ID" value="ENSDARP00000065863"/>
    <property type="gene ID" value="ENSDARG00000044812"/>
</dbReference>
<dbReference type="GeneID" id="569538"/>
<dbReference type="eggNOG" id="KOG4507">
    <property type="taxonomic scope" value="Eukaryota"/>
</dbReference>
<dbReference type="HOGENOM" id="CLU_008510_0_0_1"/>
<dbReference type="InParanoid" id="E7F211"/>
<dbReference type="OMA" id="PDDHAKQ"/>
<dbReference type="OrthoDB" id="2115703at2759"/>
<dbReference type="PhylomeDB" id="E7F211"/>
<dbReference type="TreeFam" id="TF315005"/>
<dbReference type="PRO" id="PR:E7F211"/>
<dbReference type="Proteomes" id="UP000000437">
    <property type="component" value="Chromosome 7"/>
</dbReference>
<dbReference type="Bgee" id="ENSDARG00000044812">
    <property type="expression patterns" value="Expressed in early embryo and 25 other cell types or tissues"/>
</dbReference>
<dbReference type="GO" id="GO:0015629">
    <property type="term" value="C:actin cytoskeleton"/>
    <property type="evidence" value="ECO:0000250"/>
    <property type="project" value="UniProtKB"/>
</dbReference>
<dbReference type="GO" id="GO:0005737">
    <property type="term" value="C:cytoplasm"/>
    <property type="evidence" value="ECO:0000250"/>
    <property type="project" value="UniProtKB"/>
</dbReference>
<dbReference type="GO" id="GO:0005886">
    <property type="term" value="C:plasma membrane"/>
    <property type="evidence" value="ECO:0000250"/>
    <property type="project" value="UniProtKB"/>
</dbReference>
<dbReference type="GO" id="GO:0030041">
    <property type="term" value="P:actin filament polymerization"/>
    <property type="evidence" value="ECO:0000315"/>
    <property type="project" value="UniProtKB"/>
</dbReference>
<dbReference type="GO" id="GO:0044782">
    <property type="term" value="P:cilium organization"/>
    <property type="evidence" value="ECO:0000315"/>
    <property type="project" value="UniProtKB"/>
</dbReference>
<dbReference type="GO" id="GO:0061371">
    <property type="term" value="P:determination of heart left/right asymmetry"/>
    <property type="evidence" value="ECO:0000315"/>
    <property type="project" value="ZFIN"/>
</dbReference>
<dbReference type="FunFam" id="1.25.40.10:FF:000053">
    <property type="entry name" value="Tetratricopeptide repeat domain 17"/>
    <property type="match status" value="1"/>
</dbReference>
<dbReference type="FunFam" id="1.25.40.10:FF:000061">
    <property type="entry name" value="Tetratricopeptide repeat domain 17"/>
    <property type="match status" value="1"/>
</dbReference>
<dbReference type="FunFam" id="1.25.40.10:FF:000111">
    <property type="entry name" value="tetratricopeptide repeat protein 17 isoform X1"/>
    <property type="match status" value="1"/>
</dbReference>
<dbReference type="Gene3D" id="1.25.40.10">
    <property type="entry name" value="Tetratricopeptide repeat domain"/>
    <property type="match status" value="3"/>
</dbReference>
<dbReference type="InterPro" id="IPR011990">
    <property type="entry name" value="TPR-like_helical_dom_sf"/>
</dbReference>
<dbReference type="InterPro" id="IPR013105">
    <property type="entry name" value="TPR_2"/>
</dbReference>
<dbReference type="InterPro" id="IPR019734">
    <property type="entry name" value="TPR_rpt"/>
</dbReference>
<dbReference type="InterPro" id="IPR052630">
    <property type="entry name" value="TTC17"/>
</dbReference>
<dbReference type="PANTHER" id="PTHR16091:SF1">
    <property type="entry name" value="TETRATRICOPEPTIDE REPEAT PROTEIN 17"/>
    <property type="match status" value="1"/>
</dbReference>
<dbReference type="PANTHER" id="PTHR16091">
    <property type="entry name" value="TTC17 PROTEIN"/>
    <property type="match status" value="1"/>
</dbReference>
<dbReference type="Pfam" id="PF07719">
    <property type="entry name" value="TPR_2"/>
    <property type="match status" value="1"/>
</dbReference>
<dbReference type="Pfam" id="PF13181">
    <property type="entry name" value="TPR_8"/>
    <property type="match status" value="1"/>
</dbReference>
<dbReference type="SMART" id="SM00028">
    <property type="entry name" value="TPR"/>
    <property type="match status" value="8"/>
</dbReference>
<dbReference type="SUPFAM" id="SSF48452">
    <property type="entry name" value="TPR-like"/>
    <property type="match status" value="1"/>
</dbReference>
<dbReference type="PROSITE" id="PS50005">
    <property type="entry name" value="TPR"/>
    <property type="match status" value="5"/>
</dbReference>
<dbReference type="PROSITE" id="PS50293">
    <property type="entry name" value="TPR_REGION"/>
    <property type="match status" value="3"/>
</dbReference>
<accession>E7F211</accession>
<reference key="1">
    <citation type="journal article" date="2013" name="Nature">
        <title>The zebrafish reference genome sequence and its relationship to the human genome.</title>
        <authorList>
            <person name="Howe K."/>
            <person name="Clark M.D."/>
            <person name="Torroja C.F."/>
            <person name="Torrance J."/>
            <person name="Berthelot C."/>
            <person name="Muffato M."/>
            <person name="Collins J.E."/>
            <person name="Humphray S."/>
            <person name="McLaren K."/>
            <person name="Matthews L."/>
            <person name="McLaren S."/>
            <person name="Sealy I."/>
            <person name="Caccamo M."/>
            <person name="Churcher C."/>
            <person name="Scott C."/>
            <person name="Barrett J.C."/>
            <person name="Koch R."/>
            <person name="Rauch G.J."/>
            <person name="White S."/>
            <person name="Chow W."/>
            <person name="Kilian B."/>
            <person name="Quintais L.T."/>
            <person name="Guerra-Assuncao J.A."/>
            <person name="Zhou Y."/>
            <person name="Gu Y."/>
            <person name="Yen J."/>
            <person name="Vogel J.H."/>
            <person name="Eyre T."/>
            <person name="Redmond S."/>
            <person name="Banerjee R."/>
            <person name="Chi J."/>
            <person name="Fu B."/>
            <person name="Langley E."/>
            <person name="Maguire S.F."/>
            <person name="Laird G.K."/>
            <person name="Lloyd D."/>
            <person name="Kenyon E."/>
            <person name="Donaldson S."/>
            <person name="Sehra H."/>
            <person name="Almeida-King J."/>
            <person name="Loveland J."/>
            <person name="Trevanion S."/>
            <person name="Jones M."/>
            <person name="Quail M."/>
            <person name="Willey D."/>
            <person name="Hunt A."/>
            <person name="Burton J."/>
            <person name="Sims S."/>
            <person name="McLay K."/>
            <person name="Plumb B."/>
            <person name="Davis J."/>
            <person name="Clee C."/>
            <person name="Oliver K."/>
            <person name="Clark R."/>
            <person name="Riddle C."/>
            <person name="Elliot D."/>
            <person name="Threadgold G."/>
            <person name="Harden G."/>
            <person name="Ware D."/>
            <person name="Begum S."/>
            <person name="Mortimore B."/>
            <person name="Kerry G."/>
            <person name="Heath P."/>
            <person name="Phillimore B."/>
            <person name="Tracey A."/>
            <person name="Corby N."/>
            <person name="Dunn M."/>
            <person name="Johnson C."/>
            <person name="Wood J."/>
            <person name="Clark S."/>
            <person name="Pelan S."/>
            <person name="Griffiths G."/>
            <person name="Smith M."/>
            <person name="Glithero R."/>
            <person name="Howden P."/>
            <person name="Barker N."/>
            <person name="Lloyd C."/>
            <person name="Stevens C."/>
            <person name="Harley J."/>
            <person name="Holt K."/>
            <person name="Panagiotidis G."/>
            <person name="Lovell J."/>
            <person name="Beasley H."/>
            <person name="Henderson C."/>
            <person name="Gordon D."/>
            <person name="Auger K."/>
            <person name="Wright D."/>
            <person name="Collins J."/>
            <person name="Raisen C."/>
            <person name="Dyer L."/>
            <person name="Leung K."/>
            <person name="Robertson L."/>
            <person name="Ambridge K."/>
            <person name="Leongamornlert D."/>
            <person name="McGuire S."/>
            <person name="Gilderthorp R."/>
            <person name="Griffiths C."/>
            <person name="Manthravadi D."/>
            <person name="Nichol S."/>
            <person name="Barker G."/>
            <person name="Whitehead S."/>
            <person name="Kay M."/>
            <person name="Brown J."/>
            <person name="Murnane C."/>
            <person name="Gray E."/>
            <person name="Humphries M."/>
            <person name="Sycamore N."/>
            <person name="Barker D."/>
            <person name="Saunders D."/>
            <person name="Wallis J."/>
            <person name="Babbage A."/>
            <person name="Hammond S."/>
            <person name="Mashreghi-Mohammadi M."/>
            <person name="Barr L."/>
            <person name="Martin S."/>
            <person name="Wray P."/>
            <person name="Ellington A."/>
            <person name="Matthews N."/>
            <person name="Ellwood M."/>
            <person name="Woodmansey R."/>
            <person name="Clark G."/>
            <person name="Cooper J."/>
            <person name="Tromans A."/>
            <person name="Grafham D."/>
            <person name="Skuce C."/>
            <person name="Pandian R."/>
            <person name="Andrews R."/>
            <person name="Harrison E."/>
            <person name="Kimberley A."/>
            <person name="Garnett J."/>
            <person name="Fosker N."/>
            <person name="Hall R."/>
            <person name="Garner P."/>
            <person name="Kelly D."/>
            <person name="Bird C."/>
            <person name="Palmer S."/>
            <person name="Gehring I."/>
            <person name="Berger A."/>
            <person name="Dooley C.M."/>
            <person name="Ersan-Urun Z."/>
            <person name="Eser C."/>
            <person name="Geiger H."/>
            <person name="Geisler M."/>
            <person name="Karotki L."/>
            <person name="Kirn A."/>
            <person name="Konantz J."/>
            <person name="Konantz M."/>
            <person name="Oberlander M."/>
            <person name="Rudolph-Geiger S."/>
            <person name="Teucke M."/>
            <person name="Lanz C."/>
            <person name="Raddatz G."/>
            <person name="Osoegawa K."/>
            <person name="Zhu B."/>
            <person name="Rapp A."/>
            <person name="Widaa S."/>
            <person name="Langford C."/>
            <person name="Yang F."/>
            <person name="Schuster S.C."/>
            <person name="Carter N.P."/>
            <person name="Harrow J."/>
            <person name="Ning Z."/>
            <person name="Herrero J."/>
            <person name="Searle S.M."/>
            <person name="Enright A."/>
            <person name="Geisler R."/>
            <person name="Plasterk R.H."/>
            <person name="Lee C."/>
            <person name="Westerfield M."/>
            <person name="de Jong P.J."/>
            <person name="Zon L.I."/>
            <person name="Postlethwait J.H."/>
            <person name="Nusslein-Volhard C."/>
            <person name="Hubbard T.J."/>
            <person name="Roest Crollius H."/>
            <person name="Rogers J."/>
            <person name="Stemple D.L."/>
        </authorList>
    </citation>
    <scope>NUCLEOTIDE SEQUENCE [LARGE SCALE GENOMIC DNA]</scope>
    <source>
        <strain>Tuebingen</strain>
    </source>
</reference>
<reference key="2">
    <citation type="journal article" date="2014" name="PLoS ONE">
        <title>C2orf62 and TTC17 Are Involved in Actin Organization and Ciliogenesis in Zebrafish and Human.</title>
        <authorList>
            <person name="Bontems F."/>
            <person name="Fish R.J."/>
            <person name="Borlat I."/>
            <person name="Lembo F."/>
            <person name="Chocu S."/>
            <person name="Chalmel F."/>
            <person name="Borg J.P."/>
            <person name="Pineau C."/>
            <person name="Neerman-Arbez M."/>
            <person name="Bairoch A."/>
            <person name="Lane L."/>
        </authorList>
    </citation>
    <scope>FUNCTION</scope>
    <scope>DISRUPTION PHENOTYPE</scope>
</reference>
<sequence length="1198" mass="134999">MTRSFRVEWTDGRKMADDKSNSIGDNSTNKRLWSSSIRGSALIFICALLAEPARATTHWVVTEDGKIQQQVDSPLNLKHPHHLVLFMQQETRVNYLKKLEKQLVAQKIHIEENEDRDTGLEQRHYKEDADCVTAKVPLGDLDLYDGTFISLESKDINPEQFLDLMSALPPDLEKPDCAKLLDLPYSIHAFQHLRGVQEKVNLTSPLLSKDDPIFTSLCLKLGQSVDEVGHRIHQALLKNSSSWVLYNLASFYWRIKNEPRRAVDCVVRALHFSPRQHKDVALVNMANVLHRAHFSADAAILAHAALDLTTDLLTSHYTLGNIYAMLGEYNHSVLCYEQALQAQPGFEQALRRKHAVLCQQKLEQRLEAQHRSLQRTLNELKEYQKQHDHYLRQQEMLDKHKLIQEEQILRNIIHETQMAKEAQLGNHQMCHMGQQKFTLHCPFDLPVRYHRGELFENVHYIQFGEEVSVASSVALVSELSVNESHSPQQSYTVSLGREPAAHWDKETTTTDESRTVLWPRRSDCAQRFPTIPPAYLLPTYYLPPESRNLKALNILLESISPPPSAKMPDCSLKNVVGNRDPLESMSWALEKELRDPQAAEVLLKRSGGRSLEQTGALIAQALEKMSGPRWMMQNEAGLFWRAKGNGTQALVCLRQALHSAPPQHRDLPLVNTANLLLHYGLHSEAHELLQQALQINQSEPHTLLSLVNVHLSQGNLTGALAVFRQALSLSVHCGQCRASLPLMRCLQFYPFLYNLQHQACSSGGACEVEEDSELEDWDTGSSSSGRQEVWDSDAMPVSALEDSLLFEKVVVDSNGSGEASGQDRTREPKAEGGEEEEQDWRLREELIGAFEGALDMNGKTGDLRGIRVLKNDRVMGARGGGPCFGNCEDDEGAEWITFQVKRVKKPKSDASEGWVGEGDVRQTEPTASNSILEISGPTIPSPGPSERWKDYSSLGWPGPEECQRTRRVDLTTVASTWLAVSAKNIDITEHIDFATPLQEPAVEPVCNANLPASMHTLDHLSGVANRGGIHYTGESQLREVLQNLGKDKFPSQSFEQVGTRIAKVLEKNQTSWVLSSMAALYWRVKGQGKRAIDCLRQALNYAPHHMKDVPLISLANIFQNARLWEDALTVARMAVEIAPHFVVNHFTLANVYIAMEEFEKAMHWYESTLKLQPEFGPAKDRLRTIQCYLLSKRDRRAP</sequence>
<evidence type="ECO:0000250" key="1"/>
<evidence type="ECO:0000255" key="2"/>
<evidence type="ECO:0000256" key="3">
    <source>
        <dbReference type="SAM" id="MobiDB-lite"/>
    </source>
</evidence>
<evidence type="ECO:0000269" key="4">
    <source>
    </source>
</evidence>
<evidence type="ECO:0000305" key="5"/>
<feature type="chain" id="PRO_0000426009" description="Tetratricopeptide repeat protein 17">
    <location>
        <begin position="1"/>
        <end position="1198"/>
    </location>
</feature>
<feature type="repeat" description="TPR 1">
    <location>
        <begin position="313"/>
        <end position="346"/>
    </location>
</feature>
<feature type="repeat" description="TPR 2">
    <location>
        <begin position="630"/>
        <end position="663"/>
    </location>
</feature>
<feature type="repeat" description="TPR 3">
    <location>
        <begin position="700"/>
        <end position="733"/>
    </location>
</feature>
<feature type="repeat" description="TPR 4">
    <location>
        <begin position="1071"/>
        <end position="1105"/>
    </location>
</feature>
<feature type="repeat" description="TPR 5">
    <location>
        <begin position="1108"/>
        <end position="1141"/>
    </location>
</feature>
<feature type="repeat" description="TPR 6">
    <location>
        <begin position="1142"/>
        <end position="1175"/>
    </location>
</feature>
<feature type="region of interest" description="Disordered" evidence="3">
    <location>
        <begin position="771"/>
        <end position="792"/>
    </location>
</feature>
<feature type="region of interest" description="Disordered" evidence="3">
    <location>
        <begin position="814"/>
        <end position="839"/>
    </location>
</feature>
<feature type="coiled-coil region" evidence="2">
    <location>
        <begin position="358"/>
        <end position="399"/>
    </location>
</feature>
<feature type="compositionally biased region" description="Basic and acidic residues" evidence="3">
    <location>
        <begin position="821"/>
        <end position="832"/>
    </location>
</feature>
<comment type="function">
    <text evidence="4">Plays a role in primary ciliogenesis by modulating actin polymerization.</text>
</comment>
<comment type="subcellular location">
    <subcellularLocation>
        <location evidence="1">Cytoplasm</location>
    </subcellularLocation>
    <subcellularLocation>
        <location evidence="1">Cell membrane</location>
    </subcellularLocation>
    <subcellularLocation>
        <location evidence="1">Cytoplasm</location>
        <location evidence="1">Cytoskeleton</location>
    </subcellularLocation>
</comment>
<comment type="disruption phenotype">
    <text evidence="4">Morpholino knockdown of the protein causes curved body, a lack of defined brain structures or necrosis in the developing brain, and eye formation defects at 24 hpf. At 48 hpf, show a reduction in number of ciliated cells within the olfactory organ.</text>
</comment>
<comment type="similarity">
    <text evidence="5">Belongs to the TTC17 family.</text>
</comment>
<keyword id="KW-1003">Cell membrane</keyword>
<keyword id="KW-0970">Cilium biogenesis/degradation</keyword>
<keyword id="KW-0175">Coiled coil</keyword>
<keyword id="KW-0963">Cytoplasm</keyword>
<keyword id="KW-0206">Cytoskeleton</keyword>
<keyword id="KW-0472">Membrane</keyword>
<keyword id="KW-1185">Reference proteome</keyword>
<keyword id="KW-0677">Repeat</keyword>
<keyword id="KW-0802">TPR repeat</keyword>
<organism>
    <name type="scientific">Danio rerio</name>
    <name type="common">Zebrafish</name>
    <name type="synonym">Brachydanio rerio</name>
    <dbReference type="NCBI Taxonomy" id="7955"/>
    <lineage>
        <taxon>Eukaryota</taxon>
        <taxon>Metazoa</taxon>
        <taxon>Chordata</taxon>
        <taxon>Craniata</taxon>
        <taxon>Vertebrata</taxon>
        <taxon>Euteleostomi</taxon>
        <taxon>Actinopterygii</taxon>
        <taxon>Neopterygii</taxon>
        <taxon>Teleostei</taxon>
        <taxon>Ostariophysi</taxon>
        <taxon>Cypriniformes</taxon>
        <taxon>Danionidae</taxon>
        <taxon>Danioninae</taxon>
        <taxon>Danio</taxon>
    </lineage>
</organism>
<name>TTC17_DANRE</name>
<gene>
    <name type="primary">ttc17</name>
</gene>
<proteinExistence type="inferred from homology"/>
<protein>
    <recommendedName>
        <fullName>Tetratricopeptide repeat protein 17</fullName>
        <shortName>TPR repeat protein 17</shortName>
    </recommendedName>
</protein>